<gene>
    <name type="primary">RPL15</name>
</gene>
<sequence>MGAYKYIQELWRKKQSDVMRFLLRVRCWQYRQLSALHRAPRPTRPDKARRLGYKAKQGYVIYRIRVRRGGRKRPVPKGATYGKPVHHGVNQLKFARSLQSVAEERAGRHCGALRVLNSYWVGEDSTYKFFEVILIDPFHKAIRRNPDTQWITKPVHKHREMRGLTSAGRKSRGLGKGHKFHHTIGGSRRAAWRRRNTLQLHRYR</sequence>
<protein>
    <recommendedName>
        <fullName evidence="4">Large ribosomal subunit protein eL15</fullName>
    </recommendedName>
    <alternativeName>
        <fullName>60S ribosomal protein L15</fullName>
    </alternativeName>
</protein>
<reference key="1">
    <citation type="journal article" date="2005" name="Nature">
        <title>Genome sequence, comparative analysis and haplotype structure of the domestic dog.</title>
        <authorList>
            <person name="Lindblad-Toh K."/>
            <person name="Wade C.M."/>
            <person name="Mikkelsen T.S."/>
            <person name="Karlsson E.K."/>
            <person name="Jaffe D.B."/>
            <person name="Kamal M."/>
            <person name="Clamp M."/>
            <person name="Chang J.L."/>
            <person name="Kulbokas E.J. III"/>
            <person name="Zody M.C."/>
            <person name="Mauceli E."/>
            <person name="Xie X."/>
            <person name="Breen M."/>
            <person name="Wayne R.K."/>
            <person name="Ostrander E.A."/>
            <person name="Ponting C.P."/>
            <person name="Galibert F."/>
            <person name="Smith D.R."/>
            <person name="deJong P.J."/>
            <person name="Kirkness E.F."/>
            <person name="Alvarez P."/>
            <person name="Biagi T."/>
            <person name="Brockman W."/>
            <person name="Butler J."/>
            <person name="Chin C.-W."/>
            <person name="Cook A."/>
            <person name="Cuff J."/>
            <person name="Daly M.J."/>
            <person name="DeCaprio D."/>
            <person name="Gnerre S."/>
            <person name="Grabherr M."/>
            <person name="Kellis M."/>
            <person name="Kleber M."/>
            <person name="Bardeleben C."/>
            <person name="Goodstadt L."/>
            <person name="Heger A."/>
            <person name="Hitte C."/>
            <person name="Kim L."/>
            <person name="Koepfli K.-P."/>
            <person name="Parker H.G."/>
            <person name="Pollinger J.P."/>
            <person name="Searle S.M.J."/>
            <person name="Sutter N.B."/>
            <person name="Thomas R."/>
            <person name="Webber C."/>
            <person name="Baldwin J."/>
            <person name="Abebe A."/>
            <person name="Abouelleil A."/>
            <person name="Aftuck L."/>
            <person name="Ait-Zahra M."/>
            <person name="Aldredge T."/>
            <person name="Allen N."/>
            <person name="An P."/>
            <person name="Anderson S."/>
            <person name="Antoine C."/>
            <person name="Arachchi H."/>
            <person name="Aslam A."/>
            <person name="Ayotte L."/>
            <person name="Bachantsang P."/>
            <person name="Barry A."/>
            <person name="Bayul T."/>
            <person name="Benamara M."/>
            <person name="Berlin A."/>
            <person name="Bessette D."/>
            <person name="Blitshteyn B."/>
            <person name="Bloom T."/>
            <person name="Blye J."/>
            <person name="Boguslavskiy L."/>
            <person name="Bonnet C."/>
            <person name="Boukhgalter B."/>
            <person name="Brown A."/>
            <person name="Cahill P."/>
            <person name="Calixte N."/>
            <person name="Camarata J."/>
            <person name="Cheshatsang Y."/>
            <person name="Chu J."/>
            <person name="Citroen M."/>
            <person name="Collymore A."/>
            <person name="Cooke P."/>
            <person name="Dawoe T."/>
            <person name="Daza R."/>
            <person name="Decktor K."/>
            <person name="DeGray S."/>
            <person name="Dhargay N."/>
            <person name="Dooley K."/>
            <person name="Dooley K."/>
            <person name="Dorje P."/>
            <person name="Dorjee K."/>
            <person name="Dorris L."/>
            <person name="Duffey N."/>
            <person name="Dupes A."/>
            <person name="Egbiremolen O."/>
            <person name="Elong R."/>
            <person name="Falk J."/>
            <person name="Farina A."/>
            <person name="Faro S."/>
            <person name="Ferguson D."/>
            <person name="Ferreira P."/>
            <person name="Fisher S."/>
            <person name="FitzGerald M."/>
            <person name="Foley K."/>
            <person name="Foley C."/>
            <person name="Franke A."/>
            <person name="Friedrich D."/>
            <person name="Gage D."/>
            <person name="Garber M."/>
            <person name="Gearin G."/>
            <person name="Giannoukos G."/>
            <person name="Goode T."/>
            <person name="Goyette A."/>
            <person name="Graham J."/>
            <person name="Grandbois E."/>
            <person name="Gyaltsen K."/>
            <person name="Hafez N."/>
            <person name="Hagopian D."/>
            <person name="Hagos B."/>
            <person name="Hall J."/>
            <person name="Healy C."/>
            <person name="Hegarty R."/>
            <person name="Honan T."/>
            <person name="Horn A."/>
            <person name="Houde N."/>
            <person name="Hughes L."/>
            <person name="Hunnicutt L."/>
            <person name="Husby M."/>
            <person name="Jester B."/>
            <person name="Jones C."/>
            <person name="Kamat A."/>
            <person name="Kanga B."/>
            <person name="Kells C."/>
            <person name="Khazanovich D."/>
            <person name="Kieu A.C."/>
            <person name="Kisner P."/>
            <person name="Kumar M."/>
            <person name="Lance K."/>
            <person name="Landers T."/>
            <person name="Lara M."/>
            <person name="Lee W."/>
            <person name="Leger J.-P."/>
            <person name="Lennon N."/>
            <person name="Leuper L."/>
            <person name="LeVine S."/>
            <person name="Liu J."/>
            <person name="Liu X."/>
            <person name="Lokyitsang Y."/>
            <person name="Lokyitsang T."/>
            <person name="Lui A."/>
            <person name="Macdonald J."/>
            <person name="Major J."/>
            <person name="Marabella R."/>
            <person name="Maru K."/>
            <person name="Matthews C."/>
            <person name="McDonough S."/>
            <person name="Mehta T."/>
            <person name="Meldrim J."/>
            <person name="Melnikov A."/>
            <person name="Meneus L."/>
            <person name="Mihalev A."/>
            <person name="Mihova T."/>
            <person name="Miller K."/>
            <person name="Mittelman R."/>
            <person name="Mlenga V."/>
            <person name="Mulrain L."/>
            <person name="Munson G."/>
            <person name="Navidi A."/>
            <person name="Naylor J."/>
            <person name="Nguyen T."/>
            <person name="Nguyen N."/>
            <person name="Nguyen C."/>
            <person name="Nguyen T."/>
            <person name="Nicol R."/>
            <person name="Norbu N."/>
            <person name="Norbu C."/>
            <person name="Novod N."/>
            <person name="Nyima T."/>
            <person name="Olandt P."/>
            <person name="O'Neill B."/>
            <person name="O'Neill K."/>
            <person name="Osman S."/>
            <person name="Oyono L."/>
            <person name="Patti C."/>
            <person name="Perrin D."/>
            <person name="Phunkhang P."/>
            <person name="Pierre F."/>
            <person name="Priest M."/>
            <person name="Rachupka A."/>
            <person name="Raghuraman S."/>
            <person name="Rameau R."/>
            <person name="Ray V."/>
            <person name="Raymond C."/>
            <person name="Rege F."/>
            <person name="Rise C."/>
            <person name="Rogers J."/>
            <person name="Rogov P."/>
            <person name="Sahalie J."/>
            <person name="Settipalli S."/>
            <person name="Sharpe T."/>
            <person name="Shea T."/>
            <person name="Sheehan M."/>
            <person name="Sherpa N."/>
            <person name="Shi J."/>
            <person name="Shih D."/>
            <person name="Sloan J."/>
            <person name="Smith C."/>
            <person name="Sparrow T."/>
            <person name="Stalker J."/>
            <person name="Stange-Thomann N."/>
            <person name="Stavropoulos S."/>
            <person name="Stone C."/>
            <person name="Stone S."/>
            <person name="Sykes S."/>
            <person name="Tchuinga P."/>
            <person name="Tenzing P."/>
            <person name="Tesfaye S."/>
            <person name="Thoulutsang D."/>
            <person name="Thoulutsang Y."/>
            <person name="Topham K."/>
            <person name="Topping I."/>
            <person name="Tsamla T."/>
            <person name="Vassiliev H."/>
            <person name="Venkataraman V."/>
            <person name="Vo A."/>
            <person name="Wangchuk T."/>
            <person name="Wangdi T."/>
            <person name="Weiand M."/>
            <person name="Wilkinson J."/>
            <person name="Wilson A."/>
            <person name="Yadav S."/>
            <person name="Yang S."/>
            <person name="Yang X."/>
            <person name="Young G."/>
            <person name="Yu Q."/>
            <person name="Zainoun J."/>
            <person name="Zembek L."/>
            <person name="Zimmer A."/>
            <person name="Lander E.S."/>
        </authorList>
    </citation>
    <scope>NUCLEOTIDE SEQUENCE [LARGE SCALE GENOMIC DNA]</scope>
    <source>
        <strain>Boxer</strain>
    </source>
</reference>
<reference key="2">
    <citation type="journal article" date="2008" name="Structure">
        <title>Structure of the mammalian 80S ribosome at 8.7 A resolution.</title>
        <authorList>
            <person name="Chandramouli P."/>
            <person name="Topf M."/>
            <person name="Menetret J.F."/>
            <person name="Eswar N."/>
            <person name="Cannone J.J."/>
            <person name="Gutell R.R."/>
            <person name="Sali A."/>
            <person name="Akey C.W."/>
        </authorList>
    </citation>
    <scope>STRUCTURE BY ELECTRON MICROSCOPY (8.70 ANGSTROMS)</scope>
</reference>
<organism>
    <name type="scientific">Canis lupus familiaris</name>
    <name type="common">Dog</name>
    <name type="synonym">Canis familiaris</name>
    <dbReference type="NCBI Taxonomy" id="9615"/>
    <lineage>
        <taxon>Eukaryota</taxon>
        <taxon>Metazoa</taxon>
        <taxon>Chordata</taxon>
        <taxon>Craniata</taxon>
        <taxon>Vertebrata</taxon>
        <taxon>Euteleostomi</taxon>
        <taxon>Mammalia</taxon>
        <taxon>Eutheria</taxon>
        <taxon>Laurasiatheria</taxon>
        <taxon>Carnivora</taxon>
        <taxon>Caniformia</taxon>
        <taxon>Canidae</taxon>
        <taxon>Canis</taxon>
    </lineage>
</organism>
<feature type="initiator methionine" description="Removed" evidence="1">
    <location>
        <position position="1"/>
    </location>
</feature>
<feature type="chain" id="PRO_0000405588" description="Large ribosomal subunit protein eL15">
    <location>
        <begin position="2"/>
        <end position="204"/>
    </location>
</feature>
<feature type="region of interest" description="Disordered" evidence="3">
    <location>
        <begin position="165"/>
        <end position="186"/>
    </location>
</feature>
<feature type="compositionally biased region" description="Basic residues" evidence="3">
    <location>
        <begin position="169"/>
        <end position="182"/>
    </location>
</feature>
<feature type="modified residue" description="Phosphoserine" evidence="2">
    <location>
        <position position="34"/>
    </location>
</feature>
<feature type="modified residue" description="Phosphoserine" evidence="1">
    <location>
        <position position="97"/>
    </location>
</feature>
<feature type="modified residue" description="Phosphoserine" evidence="1">
    <location>
        <position position="100"/>
    </location>
</feature>
<feature type="lipid moiety-binding region" description="N-myristoyl glycine" evidence="1">
    <location>
        <position position="2"/>
    </location>
</feature>
<feature type="cross-link" description="Glycyl lysine isopeptide (Lys-Gly) (interchain with G-Cter in SUMO2)" evidence="1">
    <location>
        <position position="83"/>
    </location>
</feature>
<dbReference type="RefSeq" id="NP_001300707.1">
    <property type="nucleotide sequence ID" value="NM_001313778.2"/>
</dbReference>
<dbReference type="RefSeq" id="XP_038287528.1">
    <property type="nucleotide sequence ID" value="XM_038431600.1"/>
</dbReference>
<dbReference type="RefSeq" id="XP_862876.1">
    <property type="nucleotide sequence ID" value="XM_857783.3"/>
</dbReference>
<dbReference type="PDB" id="4V5Z">
    <property type="method" value="EM"/>
    <property type="resolution" value="8.70 A"/>
    <property type="chains" value="m=1-204"/>
</dbReference>
<dbReference type="PDBsum" id="4V5Z"/>
<dbReference type="SMR" id="E2QXF3"/>
<dbReference type="BioGRID" id="142771">
    <property type="interactions" value="1"/>
</dbReference>
<dbReference type="FunCoup" id="E2QXF3">
    <property type="interactions" value="2324"/>
</dbReference>
<dbReference type="STRING" id="9615.ENSCAFP00000008630"/>
<dbReference type="PaxDb" id="9612-ENSCAFP00000008630"/>
<dbReference type="Ensembl" id="ENSCAFT00000009299.5">
    <property type="protein sequence ID" value="ENSCAFP00000008630.3"/>
    <property type="gene ID" value="ENSCAFG00000005764.5"/>
</dbReference>
<dbReference type="Ensembl" id="ENSCAFT00030042369.1">
    <property type="protein sequence ID" value="ENSCAFP00030036969.1"/>
    <property type="gene ID" value="ENSCAFG00030022972.1"/>
</dbReference>
<dbReference type="Ensembl" id="ENSCAFT00040041226.1">
    <property type="protein sequence ID" value="ENSCAFP00040035951.1"/>
    <property type="gene ID" value="ENSCAFG00040022162.1"/>
</dbReference>
<dbReference type="GeneID" id="477046"/>
<dbReference type="KEGG" id="cfa:477046"/>
<dbReference type="CTD" id="6138"/>
<dbReference type="VGNC" id="VGNC:52901">
    <property type="gene designation" value="RPL15"/>
</dbReference>
<dbReference type="eggNOG" id="KOG1678">
    <property type="taxonomic scope" value="Eukaryota"/>
</dbReference>
<dbReference type="HOGENOM" id="CLU_080796_0_0_1"/>
<dbReference type="InParanoid" id="E2QXF3"/>
<dbReference type="OMA" id="YIRDAWK"/>
<dbReference type="OrthoDB" id="13982at33554"/>
<dbReference type="TreeFam" id="TF300050"/>
<dbReference type="Proteomes" id="UP000002254">
    <property type="component" value="Chromosome 23"/>
</dbReference>
<dbReference type="Proteomes" id="UP000694429">
    <property type="component" value="Chromosome 23"/>
</dbReference>
<dbReference type="Proteomes" id="UP000694542">
    <property type="component" value="Chromosome 23"/>
</dbReference>
<dbReference type="Proteomes" id="UP000805418">
    <property type="component" value="Unplaced"/>
</dbReference>
<dbReference type="Bgee" id="ENSCAFG00000005764">
    <property type="expression patterns" value="Expressed in olfactory bulb and 47 other cell types or tissues"/>
</dbReference>
<dbReference type="GO" id="GO:0022625">
    <property type="term" value="C:cytosolic large ribosomal subunit"/>
    <property type="evidence" value="ECO:0000318"/>
    <property type="project" value="GO_Central"/>
</dbReference>
<dbReference type="GO" id="GO:0003723">
    <property type="term" value="F:RNA binding"/>
    <property type="evidence" value="ECO:0000318"/>
    <property type="project" value="GO_Central"/>
</dbReference>
<dbReference type="GO" id="GO:0003735">
    <property type="term" value="F:structural constituent of ribosome"/>
    <property type="evidence" value="ECO:0000318"/>
    <property type="project" value="GO_Central"/>
</dbReference>
<dbReference type="GO" id="GO:0002181">
    <property type="term" value="P:cytoplasmic translation"/>
    <property type="evidence" value="ECO:0000318"/>
    <property type="project" value="GO_Central"/>
</dbReference>
<dbReference type="FunFam" id="3.40.1120.10:FF:000001">
    <property type="entry name" value="Ribosomal protein L15"/>
    <property type="match status" value="1"/>
</dbReference>
<dbReference type="Gene3D" id="3.40.1120.10">
    <property type="entry name" value="Ribosomal protein l15e"/>
    <property type="match status" value="1"/>
</dbReference>
<dbReference type="InterPro" id="IPR024794">
    <property type="entry name" value="Rbsml_eL15_core_dom_sf"/>
</dbReference>
<dbReference type="InterPro" id="IPR000439">
    <property type="entry name" value="Ribosomal_eL15"/>
</dbReference>
<dbReference type="InterPro" id="IPR020925">
    <property type="entry name" value="Ribosomal_eL15_CS"/>
</dbReference>
<dbReference type="InterPro" id="IPR012678">
    <property type="entry name" value="Ribosomal_uL23/eL15/eS24_sf"/>
</dbReference>
<dbReference type="NCBIfam" id="NF003269">
    <property type="entry name" value="PRK04243.1"/>
    <property type="match status" value="1"/>
</dbReference>
<dbReference type="PANTHER" id="PTHR11847:SF4">
    <property type="entry name" value="LARGE RIBOSOMAL SUBUNIT PROTEIN EL15"/>
    <property type="match status" value="1"/>
</dbReference>
<dbReference type="PANTHER" id="PTHR11847">
    <property type="entry name" value="RIBOSOMAL PROTEIN L15"/>
    <property type="match status" value="1"/>
</dbReference>
<dbReference type="Pfam" id="PF00827">
    <property type="entry name" value="Ribosomal_L15e"/>
    <property type="match status" value="1"/>
</dbReference>
<dbReference type="SMART" id="SM01384">
    <property type="entry name" value="Ribosomal_L15e"/>
    <property type="match status" value="1"/>
</dbReference>
<dbReference type="SUPFAM" id="SSF54189">
    <property type="entry name" value="Ribosomal proteins S24e, L23 and L15e"/>
    <property type="match status" value="1"/>
</dbReference>
<dbReference type="PROSITE" id="PS01194">
    <property type="entry name" value="RIBOSOMAL_L15E"/>
    <property type="match status" value="1"/>
</dbReference>
<comment type="function">
    <text evidence="1">Component of the large ribosomal subunit. The ribosome is a large ribonucleoprotein complex responsible for the synthesis of proteins in the cell.</text>
</comment>
<comment type="subunit">
    <text evidence="1">Component of the large ribosomal subunit. Interacts with IFIT1 (via TPR repeats 1-4).</text>
</comment>
<comment type="subcellular location">
    <subcellularLocation>
        <location evidence="1">Cytoplasm</location>
    </subcellularLocation>
</comment>
<comment type="similarity">
    <text evidence="4">Belongs to the eukaryotic ribosomal protein eL15 family.</text>
</comment>
<accession>E2QXF3</accession>
<proteinExistence type="evidence at protein level"/>
<evidence type="ECO:0000250" key="1">
    <source>
        <dbReference type="UniProtKB" id="P61313"/>
    </source>
</evidence>
<evidence type="ECO:0000250" key="2">
    <source>
        <dbReference type="UniProtKB" id="P61314"/>
    </source>
</evidence>
<evidence type="ECO:0000256" key="3">
    <source>
        <dbReference type="SAM" id="MobiDB-lite"/>
    </source>
</evidence>
<evidence type="ECO:0000305" key="4"/>
<name>RL15_CANLF</name>
<keyword id="KW-0002">3D-structure</keyword>
<keyword id="KW-0963">Cytoplasm</keyword>
<keyword id="KW-1017">Isopeptide bond</keyword>
<keyword id="KW-0449">Lipoprotein</keyword>
<keyword id="KW-0519">Myristate</keyword>
<keyword id="KW-0597">Phosphoprotein</keyword>
<keyword id="KW-1185">Reference proteome</keyword>
<keyword id="KW-0687">Ribonucleoprotein</keyword>
<keyword id="KW-0689">Ribosomal protein</keyword>
<keyword id="KW-0832">Ubl conjugation</keyword>